<feature type="chain" id="PRO_1000215368" description="Putative manganese efflux pump MntP">
    <location>
        <begin position="1"/>
        <end position="185"/>
    </location>
</feature>
<feature type="transmembrane region" description="Helical" evidence="1">
    <location>
        <begin position="6"/>
        <end position="26"/>
    </location>
</feature>
<feature type="transmembrane region" description="Helical" evidence="1">
    <location>
        <begin position="41"/>
        <end position="61"/>
    </location>
</feature>
<feature type="transmembrane region" description="Helical" evidence="1">
    <location>
        <begin position="65"/>
        <end position="85"/>
    </location>
</feature>
<feature type="transmembrane region" description="Helical" evidence="1">
    <location>
        <begin position="107"/>
        <end position="127"/>
    </location>
</feature>
<feature type="transmembrane region" description="Helical" evidence="1">
    <location>
        <begin position="132"/>
        <end position="152"/>
    </location>
</feature>
<feature type="transmembrane region" description="Helical" evidence="1">
    <location>
        <begin position="164"/>
        <end position="184"/>
    </location>
</feature>
<comment type="function">
    <text evidence="1">Probably functions as a manganese efflux pump.</text>
</comment>
<comment type="subcellular location">
    <subcellularLocation>
        <location evidence="1">Cell inner membrane</location>
        <topology evidence="1">Multi-pass membrane protein</topology>
    </subcellularLocation>
</comment>
<comment type="similarity">
    <text evidence="1">Belongs to the MntP (TC 9.B.29) family.</text>
</comment>
<gene>
    <name evidence="1" type="primary">mntP</name>
    <name type="ordered locus">Desal_2561</name>
</gene>
<keyword id="KW-0997">Cell inner membrane</keyword>
<keyword id="KW-1003">Cell membrane</keyword>
<keyword id="KW-0406">Ion transport</keyword>
<keyword id="KW-0464">Manganese</keyword>
<keyword id="KW-0472">Membrane</keyword>
<keyword id="KW-1185">Reference proteome</keyword>
<keyword id="KW-0812">Transmembrane</keyword>
<keyword id="KW-1133">Transmembrane helix</keyword>
<keyword id="KW-0813">Transport</keyword>
<reference key="1">
    <citation type="submission" date="2009-06" db="EMBL/GenBank/DDBJ databases">
        <title>Complete sequence of Desulfovibrio salexigens DSM 2638.</title>
        <authorList>
            <consortium name="US DOE Joint Genome Institute"/>
            <person name="Lucas S."/>
            <person name="Copeland A."/>
            <person name="Lapidus A."/>
            <person name="Glavina del Rio T."/>
            <person name="Tice H."/>
            <person name="Bruce D."/>
            <person name="Goodwin L."/>
            <person name="Pitluck S."/>
            <person name="Munk A.C."/>
            <person name="Brettin T."/>
            <person name="Detter J.C."/>
            <person name="Han C."/>
            <person name="Tapia R."/>
            <person name="Larimer F."/>
            <person name="Land M."/>
            <person name="Hauser L."/>
            <person name="Kyrpides N."/>
            <person name="Anderson I."/>
            <person name="Wall J.D."/>
            <person name="Arkin A.P."/>
            <person name="Dehal P."/>
            <person name="Chivian D."/>
            <person name="Giles B."/>
            <person name="Hazen T.C."/>
        </authorList>
    </citation>
    <scope>NUCLEOTIDE SEQUENCE [LARGE SCALE GENOMIC DNA]</scope>
    <source>
        <strain>ATCC 14822 / DSM 2638 / NCIMB 8403 / VKM B-1763</strain>
    </source>
</reference>
<dbReference type="EMBL" id="CP001649">
    <property type="protein sequence ID" value="ACS80617.1"/>
    <property type="molecule type" value="Genomic_DNA"/>
</dbReference>
<dbReference type="RefSeq" id="WP_015852433.1">
    <property type="nucleotide sequence ID" value="NC_012881.1"/>
</dbReference>
<dbReference type="STRING" id="526222.Desal_2561"/>
<dbReference type="KEGG" id="dsa:Desal_2561"/>
<dbReference type="eggNOG" id="COG1971">
    <property type="taxonomic scope" value="Bacteria"/>
</dbReference>
<dbReference type="HOGENOM" id="CLU_096410_3_0_7"/>
<dbReference type="OrthoDB" id="9811590at2"/>
<dbReference type="Proteomes" id="UP000002601">
    <property type="component" value="Chromosome"/>
</dbReference>
<dbReference type="GO" id="GO:0005886">
    <property type="term" value="C:plasma membrane"/>
    <property type="evidence" value="ECO:0007669"/>
    <property type="project" value="UniProtKB-SubCell"/>
</dbReference>
<dbReference type="GO" id="GO:0005384">
    <property type="term" value="F:manganese ion transmembrane transporter activity"/>
    <property type="evidence" value="ECO:0007669"/>
    <property type="project" value="UniProtKB-UniRule"/>
</dbReference>
<dbReference type="HAMAP" id="MF_01521">
    <property type="entry name" value="MntP_pump"/>
    <property type="match status" value="1"/>
</dbReference>
<dbReference type="InterPro" id="IPR003810">
    <property type="entry name" value="Mntp/YtaF"/>
</dbReference>
<dbReference type="InterPro" id="IPR022929">
    <property type="entry name" value="Put_MntP"/>
</dbReference>
<dbReference type="PANTHER" id="PTHR35529">
    <property type="entry name" value="MANGANESE EFFLUX PUMP MNTP-RELATED"/>
    <property type="match status" value="1"/>
</dbReference>
<dbReference type="PANTHER" id="PTHR35529:SF1">
    <property type="entry name" value="MANGANESE EFFLUX PUMP MNTP-RELATED"/>
    <property type="match status" value="1"/>
</dbReference>
<dbReference type="Pfam" id="PF02659">
    <property type="entry name" value="Mntp"/>
    <property type="match status" value="1"/>
</dbReference>
<accession>C6BYL0</accession>
<evidence type="ECO:0000255" key="1">
    <source>
        <dbReference type="HAMAP-Rule" id="MF_01521"/>
    </source>
</evidence>
<name>MNTP_MARSD</name>
<protein>
    <recommendedName>
        <fullName evidence="1">Putative manganese efflux pump MntP</fullName>
    </recommendedName>
</protein>
<proteinExistence type="inferred from homology"/>
<sequence length="185" mass="20190">MPFYEIFIISVALAMDAFTIAVACGLCMPEVSKRQNFRLSFHFGLFQALMPLLGWLAGLTVKSMVETYAPWISFFLLAFVGGKMIQESFETDDSCDTYKDPTKGLSLVFLSVATSLDALAVGLSFSIMDYPIAFPCVMIGITALVLTSFGLWLGKSFAKASSYSHIAERIGGVVLILIGLKLLLQ</sequence>
<organism>
    <name type="scientific">Maridesulfovibrio salexigens (strain ATCC 14822 / DSM 2638 / NCIMB 8403 / VKM B-1763)</name>
    <name type="common">Desulfovibrio salexigens</name>
    <dbReference type="NCBI Taxonomy" id="526222"/>
    <lineage>
        <taxon>Bacteria</taxon>
        <taxon>Pseudomonadati</taxon>
        <taxon>Thermodesulfobacteriota</taxon>
        <taxon>Desulfovibrionia</taxon>
        <taxon>Desulfovibrionales</taxon>
        <taxon>Desulfovibrionaceae</taxon>
        <taxon>Maridesulfovibrio</taxon>
    </lineage>
</organism>